<proteinExistence type="inferred from homology"/>
<name>MSCL_BACAA</name>
<gene>
    <name evidence="1" type="primary">mscL</name>
    <name type="ordered locus">BAA_4935</name>
</gene>
<dbReference type="EMBL" id="CP001598">
    <property type="protein sequence ID" value="ACQ49002.1"/>
    <property type="molecule type" value="Genomic_DNA"/>
</dbReference>
<dbReference type="RefSeq" id="WP_000267001.1">
    <property type="nucleotide sequence ID" value="NC_012659.1"/>
</dbReference>
<dbReference type="SMR" id="C3PBD7"/>
<dbReference type="GeneID" id="45024544"/>
<dbReference type="KEGG" id="bai:BAA_4935"/>
<dbReference type="HOGENOM" id="CLU_095787_0_0_9"/>
<dbReference type="GO" id="GO:0005886">
    <property type="term" value="C:plasma membrane"/>
    <property type="evidence" value="ECO:0007669"/>
    <property type="project" value="UniProtKB-SubCell"/>
</dbReference>
<dbReference type="GO" id="GO:0008381">
    <property type="term" value="F:mechanosensitive monoatomic ion channel activity"/>
    <property type="evidence" value="ECO:0007669"/>
    <property type="project" value="UniProtKB-UniRule"/>
</dbReference>
<dbReference type="FunFam" id="1.10.1200.120:FF:000001">
    <property type="entry name" value="Large-conductance mechanosensitive channel"/>
    <property type="match status" value="1"/>
</dbReference>
<dbReference type="Gene3D" id="1.10.1200.120">
    <property type="entry name" value="Large-conductance mechanosensitive channel, MscL, domain 1"/>
    <property type="match status" value="1"/>
</dbReference>
<dbReference type="HAMAP" id="MF_00115">
    <property type="entry name" value="MscL"/>
    <property type="match status" value="1"/>
</dbReference>
<dbReference type="InterPro" id="IPR019823">
    <property type="entry name" value="Mechanosensitive_channel_CS"/>
</dbReference>
<dbReference type="InterPro" id="IPR001185">
    <property type="entry name" value="MS_channel"/>
</dbReference>
<dbReference type="InterPro" id="IPR037673">
    <property type="entry name" value="MSC/AndL"/>
</dbReference>
<dbReference type="InterPro" id="IPR036019">
    <property type="entry name" value="MscL_channel"/>
</dbReference>
<dbReference type="NCBIfam" id="TIGR00220">
    <property type="entry name" value="mscL"/>
    <property type="match status" value="1"/>
</dbReference>
<dbReference type="NCBIfam" id="NF001843">
    <property type="entry name" value="PRK00567.1-4"/>
    <property type="match status" value="1"/>
</dbReference>
<dbReference type="NCBIfam" id="NF010560">
    <property type="entry name" value="PRK13955.1"/>
    <property type="match status" value="1"/>
</dbReference>
<dbReference type="PANTHER" id="PTHR30266:SF2">
    <property type="entry name" value="LARGE-CONDUCTANCE MECHANOSENSITIVE CHANNEL"/>
    <property type="match status" value="1"/>
</dbReference>
<dbReference type="PANTHER" id="PTHR30266">
    <property type="entry name" value="MECHANOSENSITIVE CHANNEL MSCL"/>
    <property type="match status" value="1"/>
</dbReference>
<dbReference type="Pfam" id="PF01741">
    <property type="entry name" value="MscL"/>
    <property type="match status" value="1"/>
</dbReference>
<dbReference type="PRINTS" id="PR01264">
    <property type="entry name" value="MECHCHANNEL"/>
</dbReference>
<dbReference type="SUPFAM" id="SSF81330">
    <property type="entry name" value="Gated mechanosensitive channel"/>
    <property type="match status" value="1"/>
</dbReference>
<dbReference type="PROSITE" id="PS01327">
    <property type="entry name" value="MSCL"/>
    <property type="match status" value="1"/>
</dbReference>
<evidence type="ECO:0000255" key="1">
    <source>
        <dbReference type="HAMAP-Rule" id="MF_00115"/>
    </source>
</evidence>
<accession>C3PBD7</accession>
<reference key="1">
    <citation type="submission" date="2009-04" db="EMBL/GenBank/DDBJ databases">
        <title>Genome sequence of Bacillus anthracis A0248.</title>
        <authorList>
            <person name="Dodson R.J."/>
            <person name="Munk A.C."/>
            <person name="Bruce D."/>
            <person name="Detter C."/>
            <person name="Tapia R."/>
            <person name="Sutton G."/>
            <person name="Sims D."/>
            <person name="Brettin T."/>
        </authorList>
    </citation>
    <scope>NUCLEOTIDE SEQUENCE [LARGE SCALE GENOMIC DNA]</scope>
    <source>
        <strain>A0248</strain>
    </source>
</reference>
<sequence length="132" mass="14811">MWNEFKKFAFKGNVIDLAVGVVIGAAFGKIVSSLVKDIITPLLGMVLGGVDFTDLKITFGKSSIMYGNFIQTIFDFLIIAAAIFMFVKVFNKLTSKREEEKEEEIPEPTKEEELLGEIRDLLKQQNSSKDRA</sequence>
<comment type="function">
    <text evidence="1">Channel that opens in response to stretch forces in the membrane lipid bilayer. May participate in the regulation of osmotic pressure changes within the cell.</text>
</comment>
<comment type="subunit">
    <text evidence="1">Homopentamer.</text>
</comment>
<comment type="subcellular location">
    <subcellularLocation>
        <location evidence="1">Cell membrane</location>
        <topology evidence="1">Multi-pass membrane protein</topology>
    </subcellularLocation>
</comment>
<comment type="similarity">
    <text evidence="1">Belongs to the MscL family.</text>
</comment>
<feature type="chain" id="PRO_1000191349" description="Large-conductance mechanosensitive channel">
    <location>
        <begin position="1"/>
        <end position="132"/>
    </location>
</feature>
<feature type="transmembrane region" description="Helical" evidence="1">
    <location>
        <begin position="14"/>
        <end position="34"/>
    </location>
</feature>
<feature type="transmembrane region" description="Helical" evidence="1">
    <location>
        <begin position="67"/>
        <end position="87"/>
    </location>
</feature>
<protein>
    <recommendedName>
        <fullName evidence="1">Large-conductance mechanosensitive channel</fullName>
    </recommendedName>
</protein>
<organism>
    <name type="scientific">Bacillus anthracis (strain A0248)</name>
    <dbReference type="NCBI Taxonomy" id="592021"/>
    <lineage>
        <taxon>Bacteria</taxon>
        <taxon>Bacillati</taxon>
        <taxon>Bacillota</taxon>
        <taxon>Bacilli</taxon>
        <taxon>Bacillales</taxon>
        <taxon>Bacillaceae</taxon>
        <taxon>Bacillus</taxon>
        <taxon>Bacillus cereus group</taxon>
    </lineage>
</organism>
<keyword id="KW-1003">Cell membrane</keyword>
<keyword id="KW-0407">Ion channel</keyword>
<keyword id="KW-0406">Ion transport</keyword>
<keyword id="KW-0472">Membrane</keyword>
<keyword id="KW-0812">Transmembrane</keyword>
<keyword id="KW-1133">Transmembrane helix</keyword>
<keyword id="KW-0813">Transport</keyword>